<comment type="function">
    <text evidence="1">This is one of the proteins that binds to the 5S RNA in the ribosome where it forms part of the central protuberance.</text>
</comment>
<comment type="subunit">
    <text evidence="1">Part of the 50S ribosomal subunit; part of the 5S rRNA/L5/L18/L25 subcomplex. Contacts the 5S rRNA. Binds to the 5S rRNA independently of L5 and L18.</text>
</comment>
<comment type="similarity">
    <text evidence="1">Belongs to the bacterial ribosomal protein bL25 family. CTC subfamily.</text>
</comment>
<protein>
    <recommendedName>
        <fullName evidence="1">Large ribosomal subunit protein bL25</fullName>
    </recommendedName>
    <alternativeName>
        <fullName evidence="3">50S ribosomal protein L25</fullName>
    </alternativeName>
    <alternativeName>
        <fullName evidence="1">General stress protein CTC</fullName>
    </alternativeName>
</protein>
<dbReference type="EMBL" id="AM746676">
    <property type="protein sequence ID" value="CAN97104.1"/>
    <property type="molecule type" value="Genomic_DNA"/>
</dbReference>
<dbReference type="RefSeq" id="WP_012239543.1">
    <property type="nucleotide sequence ID" value="NC_010162.1"/>
</dbReference>
<dbReference type="SMR" id="A9GXJ8"/>
<dbReference type="STRING" id="448385.sce6935"/>
<dbReference type="KEGG" id="scl:sce6935"/>
<dbReference type="eggNOG" id="COG1825">
    <property type="taxonomic scope" value="Bacteria"/>
</dbReference>
<dbReference type="HOGENOM" id="CLU_075939_2_1_7"/>
<dbReference type="OrthoDB" id="9786489at2"/>
<dbReference type="BioCyc" id="SCEL448385:SCE_RS35570-MONOMER"/>
<dbReference type="Proteomes" id="UP000002139">
    <property type="component" value="Chromosome"/>
</dbReference>
<dbReference type="GO" id="GO:0022625">
    <property type="term" value="C:cytosolic large ribosomal subunit"/>
    <property type="evidence" value="ECO:0007669"/>
    <property type="project" value="TreeGrafter"/>
</dbReference>
<dbReference type="GO" id="GO:0008097">
    <property type="term" value="F:5S rRNA binding"/>
    <property type="evidence" value="ECO:0007669"/>
    <property type="project" value="InterPro"/>
</dbReference>
<dbReference type="GO" id="GO:0003735">
    <property type="term" value="F:structural constituent of ribosome"/>
    <property type="evidence" value="ECO:0007669"/>
    <property type="project" value="InterPro"/>
</dbReference>
<dbReference type="GO" id="GO:0006412">
    <property type="term" value="P:translation"/>
    <property type="evidence" value="ECO:0007669"/>
    <property type="project" value="UniProtKB-UniRule"/>
</dbReference>
<dbReference type="CDD" id="cd00495">
    <property type="entry name" value="Ribosomal_L25_TL5_CTC"/>
    <property type="match status" value="1"/>
</dbReference>
<dbReference type="Gene3D" id="2.170.120.20">
    <property type="entry name" value="Ribosomal protein L25, beta domain"/>
    <property type="match status" value="1"/>
</dbReference>
<dbReference type="Gene3D" id="2.40.240.10">
    <property type="entry name" value="Ribosomal Protein L25, Chain P"/>
    <property type="match status" value="1"/>
</dbReference>
<dbReference type="HAMAP" id="MF_01334">
    <property type="entry name" value="Ribosomal_bL25_CTC"/>
    <property type="match status" value="1"/>
</dbReference>
<dbReference type="InterPro" id="IPR020056">
    <property type="entry name" value="Rbsml_bL25/Gln-tRNA_synth_N"/>
</dbReference>
<dbReference type="InterPro" id="IPR011035">
    <property type="entry name" value="Ribosomal_bL25/Gln-tRNA_synth"/>
</dbReference>
<dbReference type="InterPro" id="IPR020057">
    <property type="entry name" value="Ribosomal_bL25_b-dom"/>
</dbReference>
<dbReference type="InterPro" id="IPR037121">
    <property type="entry name" value="Ribosomal_bL25_C"/>
</dbReference>
<dbReference type="InterPro" id="IPR001021">
    <property type="entry name" value="Ribosomal_bL25_long"/>
</dbReference>
<dbReference type="InterPro" id="IPR029751">
    <property type="entry name" value="Ribosomal_L25_dom"/>
</dbReference>
<dbReference type="InterPro" id="IPR020930">
    <property type="entry name" value="Ribosomal_uL5_bac-type"/>
</dbReference>
<dbReference type="NCBIfam" id="TIGR00731">
    <property type="entry name" value="bL25_bact_ctc"/>
    <property type="match status" value="1"/>
</dbReference>
<dbReference type="NCBIfam" id="NF004137">
    <property type="entry name" value="PRK05618.3-3"/>
    <property type="match status" value="1"/>
</dbReference>
<dbReference type="PANTHER" id="PTHR33284">
    <property type="entry name" value="RIBOSOMAL PROTEIN L25/GLN-TRNA SYNTHETASE, ANTI-CODON-BINDING DOMAIN-CONTAINING PROTEIN"/>
    <property type="match status" value="1"/>
</dbReference>
<dbReference type="PANTHER" id="PTHR33284:SF1">
    <property type="entry name" value="RIBOSOMAL PROTEIN L25_GLN-TRNA SYNTHETASE, ANTI-CODON-BINDING DOMAIN-CONTAINING PROTEIN"/>
    <property type="match status" value="1"/>
</dbReference>
<dbReference type="Pfam" id="PF01386">
    <property type="entry name" value="Ribosomal_L25p"/>
    <property type="match status" value="1"/>
</dbReference>
<dbReference type="Pfam" id="PF14693">
    <property type="entry name" value="Ribosomal_TL5_C"/>
    <property type="match status" value="1"/>
</dbReference>
<dbReference type="SUPFAM" id="SSF50715">
    <property type="entry name" value="Ribosomal protein L25-like"/>
    <property type="match status" value="1"/>
</dbReference>
<evidence type="ECO:0000255" key="1">
    <source>
        <dbReference type="HAMAP-Rule" id="MF_01334"/>
    </source>
</evidence>
<evidence type="ECO:0000256" key="2">
    <source>
        <dbReference type="SAM" id="MobiDB-lite"/>
    </source>
</evidence>
<evidence type="ECO:0000305" key="3"/>
<feature type="chain" id="PRO_1000086637" description="Large ribosomal subunit protein bL25">
    <location>
        <begin position="1"/>
        <end position="229"/>
    </location>
</feature>
<feature type="region of interest" description="Disordered" evidence="2">
    <location>
        <begin position="1"/>
        <end position="21"/>
    </location>
</feature>
<feature type="region of interest" description="Disordered" evidence="2">
    <location>
        <begin position="182"/>
        <end position="229"/>
    </location>
</feature>
<feature type="compositionally biased region" description="Low complexity" evidence="2">
    <location>
        <begin position="195"/>
        <end position="222"/>
    </location>
</feature>
<name>RL25_SORC5</name>
<sequence length="229" mass="24042">MDIIKLNATRREDSGKSASSRLRRAGQIPAIAYGRELAPQSVAISPKALLQVLGSDHGKNSVVELAIENGQTLTVMVRDYDYHPISRELVHADFIQVKLDQPVDVQIPFRCVGKPKGVVTGGVLQQIFRTIPVRCLPEKIPSFIEIDVTELDLGDSYKASGLKLPEGVKTLLADDQTIAVVNAPEKAGPEEEAKPAAGAPAAGAAAAPAAGAAAPAKGAAPAADKKDKK</sequence>
<gene>
    <name evidence="1" type="primary">rplY</name>
    <name evidence="1" type="synonym">ctc</name>
    <name type="ordered locus">sce6935</name>
</gene>
<organism>
    <name type="scientific">Sorangium cellulosum (strain So ce56)</name>
    <name type="common">Polyangium cellulosum (strain So ce56)</name>
    <dbReference type="NCBI Taxonomy" id="448385"/>
    <lineage>
        <taxon>Bacteria</taxon>
        <taxon>Pseudomonadati</taxon>
        <taxon>Myxococcota</taxon>
        <taxon>Polyangia</taxon>
        <taxon>Polyangiales</taxon>
        <taxon>Polyangiaceae</taxon>
        <taxon>Sorangium</taxon>
    </lineage>
</organism>
<reference key="1">
    <citation type="journal article" date="2007" name="Nat. Biotechnol.">
        <title>Complete genome sequence of the myxobacterium Sorangium cellulosum.</title>
        <authorList>
            <person name="Schneiker S."/>
            <person name="Perlova O."/>
            <person name="Kaiser O."/>
            <person name="Gerth K."/>
            <person name="Alici A."/>
            <person name="Altmeyer M.O."/>
            <person name="Bartels D."/>
            <person name="Bekel T."/>
            <person name="Beyer S."/>
            <person name="Bode E."/>
            <person name="Bode H.B."/>
            <person name="Bolten C.J."/>
            <person name="Choudhuri J.V."/>
            <person name="Doss S."/>
            <person name="Elnakady Y.A."/>
            <person name="Frank B."/>
            <person name="Gaigalat L."/>
            <person name="Goesmann A."/>
            <person name="Groeger C."/>
            <person name="Gross F."/>
            <person name="Jelsbak L."/>
            <person name="Jelsbak L."/>
            <person name="Kalinowski J."/>
            <person name="Kegler C."/>
            <person name="Knauber T."/>
            <person name="Konietzny S."/>
            <person name="Kopp M."/>
            <person name="Krause L."/>
            <person name="Krug D."/>
            <person name="Linke B."/>
            <person name="Mahmud T."/>
            <person name="Martinez-Arias R."/>
            <person name="McHardy A.C."/>
            <person name="Merai M."/>
            <person name="Meyer F."/>
            <person name="Mormann S."/>
            <person name="Munoz-Dorado J."/>
            <person name="Perez J."/>
            <person name="Pradella S."/>
            <person name="Rachid S."/>
            <person name="Raddatz G."/>
            <person name="Rosenau F."/>
            <person name="Rueckert C."/>
            <person name="Sasse F."/>
            <person name="Scharfe M."/>
            <person name="Schuster S.C."/>
            <person name="Suen G."/>
            <person name="Treuner-Lange A."/>
            <person name="Velicer G.J."/>
            <person name="Vorholter F.-J."/>
            <person name="Weissman K.J."/>
            <person name="Welch R.D."/>
            <person name="Wenzel S.C."/>
            <person name="Whitworth D.E."/>
            <person name="Wilhelm S."/>
            <person name="Wittmann C."/>
            <person name="Bloecker H."/>
            <person name="Puehler A."/>
            <person name="Mueller R."/>
        </authorList>
    </citation>
    <scope>NUCLEOTIDE SEQUENCE [LARGE SCALE GENOMIC DNA]</scope>
    <source>
        <strain>So ce56</strain>
    </source>
</reference>
<accession>A9GXJ8</accession>
<keyword id="KW-1185">Reference proteome</keyword>
<keyword id="KW-0687">Ribonucleoprotein</keyword>
<keyword id="KW-0689">Ribosomal protein</keyword>
<keyword id="KW-0694">RNA-binding</keyword>
<keyword id="KW-0699">rRNA-binding</keyword>
<proteinExistence type="inferred from homology"/>